<accession>Q88XW8</accession>
<accession>F9UMM3</accession>
<organism>
    <name type="scientific">Lactiplantibacillus plantarum (strain ATCC BAA-793 / NCIMB 8826 / WCFS1)</name>
    <name type="common">Lactobacillus plantarum</name>
    <dbReference type="NCBI Taxonomy" id="220668"/>
    <lineage>
        <taxon>Bacteria</taxon>
        <taxon>Bacillati</taxon>
        <taxon>Bacillota</taxon>
        <taxon>Bacilli</taxon>
        <taxon>Lactobacillales</taxon>
        <taxon>Lactobacillaceae</taxon>
        <taxon>Lactiplantibacillus</taxon>
    </lineage>
</organism>
<reference key="1">
    <citation type="journal article" date="2003" name="Proc. Natl. Acad. Sci. U.S.A.">
        <title>Complete genome sequence of Lactobacillus plantarum WCFS1.</title>
        <authorList>
            <person name="Kleerebezem M."/>
            <person name="Boekhorst J."/>
            <person name="van Kranenburg R."/>
            <person name="Molenaar D."/>
            <person name="Kuipers O.P."/>
            <person name="Leer R."/>
            <person name="Tarchini R."/>
            <person name="Peters S.A."/>
            <person name="Sandbrink H.M."/>
            <person name="Fiers M.W.E.J."/>
            <person name="Stiekema W."/>
            <person name="Klein Lankhorst R.M."/>
            <person name="Bron P.A."/>
            <person name="Hoffer S.M."/>
            <person name="Nierop Groot M.N."/>
            <person name="Kerkhoven R."/>
            <person name="De Vries M."/>
            <person name="Ursing B."/>
            <person name="De Vos W.M."/>
            <person name="Siezen R.J."/>
        </authorList>
    </citation>
    <scope>NUCLEOTIDE SEQUENCE [LARGE SCALE GENOMIC DNA]</scope>
    <source>
        <strain>ATCC BAA-793 / NCIMB 8826 / WCFS1</strain>
    </source>
</reference>
<reference key="2">
    <citation type="journal article" date="2012" name="J. Bacteriol.">
        <title>Complete resequencing and reannotation of the Lactobacillus plantarum WCFS1 genome.</title>
        <authorList>
            <person name="Siezen R.J."/>
            <person name="Francke C."/>
            <person name="Renckens B."/>
            <person name="Boekhorst J."/>
            <person name="Wels M."/>
            <person name="Kleerebezem M."/>
            <person name="van Hijum S.A."/>
        </authorList>
    </citation>
    <scope>NUCLEOTIDE SEQUENCE [LARGE SCALE GENOMIC DNA]</scope>
    <scope>GENOME REANNOTATION</scope>
    <source>
        <strain>ATCC BAA-793 / NCIMB 8826 / WCFS1</strain>
    </source>
</reference>
<dbReference type="EMBL" id="AL935263">
    <property type="protein sequence ID" value="CCC78462.1"/>
    <property type="molecule type" value="Genomic_DNA"/>
</dbReference>
<dbReference type="RefSeq" id="WP_003641261.1">
    <property type="nucleotide sequence ID" value="NC_004567.2"/>
</dbReference>
<dbReference type="RefSeq" id="YP_004888976.1">
    <property type="nucleotide sequence ID" value="NC_004567.2"/>
</dbReference>
<dbReference type="SMR" id="Q88XW8"/>
<dbReference type="STRING" id="220668.lp_1054"/>
<dbReference type="EnsemblBacteria" id="CCC78462">
    <property type="protein sequence ID" value="CCC78462"/>
    <property type="gene ID" value="lp_1054"/>
</dbReference>
<dbReference type="GeneID" id="89668565"/>
<dbReference type="KEGG" id="lpl:lp_1054"/>
<dbReference type="PATRIC" id="fig|220668.9.peg.889"/>
<dbReference type="eggNOG" id="COG1841">
    <property type="taxonomic scope" value="Bacteria"/>
</dbReference>
<dbReference type="HOGENOM" id="CLU_131047_2_1_9"/>
<dbReference type="OrthoDB" id="9812790at2"/>
<dbReference type="PhylomeDB" id="Q88XW8"/>
<dbReference type="Proteomes" id="UP000000432">
    <property type="component" value="Chromosome"/>
</dbReference>
<dbReference type="GO" id="GO:0015934">
    <property type="term" value="C:large ribosomal subunit"/>
    <property type="evidence" value="ECO:0007669"/>
    <property type="project" value="InterPro"/>
</dbReference>
<dbReference type="GO" id="GO:0003735">
    <property type="term" value="F:structural constituent of ribosome"/>
    <property type="evidence" value="ECO:0007669"/>
    <property type="project" value="InterPro"/>
</dbReference>
<dbReference type="GO" id="GO:0006412">
    <property type="term" value="P:translation"/>
    <property type="evidence" value="ECO:0007669"/>
    <property type="project" value="UniProtKB-UniRule"/>
</dbReference>
<dbReference type="CDD" id="cd01658">
    <property type="entry name" value="Ribosomal_L30"/>
    <property type="match status" value="1"/>
</dbReference>
<dbReference type="Gene3D" id="3.30.1390.20">
    <property type="entry name" value="Ribosomal protein L30, ferredoxin-like fold domain"/>
    <property type="match status" value="1"/>
</dbReference>
<dbReference type="HAMAP" id="MF_01371_B">
    <property type="entry name" value="Ribosomal_uL30_B"/>
    <property type="match status" value="1"/>
</dbReference>
<dbReference type="InterPro" id="IPR036919">
    <property type="entry name" value="Ribo_uL30_ferredoxin-like_sf"/>
</dbReference>
<dbReference type="InterPro" id="IPR005996">
    <property type="entry name" value="Ribosomal_uL30_bac-type"/>
</dbReference>
<dbReference type="InterPro" id="IPR016082">
    <property type="entry name" value="Ribosomal_uL30_ferredoxin-like"/>
</dbReference>
<dbReference type="NCBIfam" id="TIGR01308">
    <property type="entry name" value="rpmD_bact"/>
    <property type="match status" value="1"/>
</dbReference>
<dbReference type="Pfam" id="PF00327">
    <property type="entry name" value="Ribosomal_L30"/>
    <property type="match status" value="1"/>
</dbReference>
<dbReference type="PIRSF" id="PIRSF002211">
    <property type="entry name" value="Ribosomal_L30_bac-type"/>
    <property type="match status" value="1"/>
</dbReference>
<dbReference type="SUPFAM" id="SSF55129">
    <property type="entry name" value="Ribosomal protein L30p/L7e"/>
    <property type="match status" value="1"/>
</dbReference>
<protein>
    <recommendedName>
        <fullName evidence="1">Large ribosomal subunit protein uL30</fullName>
    </recommendedName>
    <alternativeName>
        <fullName evidence="2">50S ribosomal protein L30</fullName>
    </alternativeName>
</protein>
<sequence length="60" mass="6681">MAQLKITLVRSAAHRLPKQRKIVKELGLGRINSSVVKPDDAATRGQIFHIAHLVDVEIIK</sequence>
<gene>
    <name evidence="1" type="primary">rpmD</name>
    <name type="ordered locus">lp_1054</name>
</gene>
<comment type="subunit">
    <text evidence="1">Part of the 50S ribosomal subunit.</text>
</comment>
<comment type="similarity">
    <text evidence="1">Belongs to the universal ribosomal protein uL30 family.</text>
</comment>
<keyword id="KW-1185">Reference proteome</keyword>
<keyword id="KW-0687">Ribonucleoprotein</keyword>
<keyword id="KW-0689">Ribosomal protein</keyword>
<proteinExistence type="inferred from homology"/>
<feature type="chain" id="PRO_1000056057" description="Large ribosomal subunit protein uL30">
    <location>
        <begin position="1"/>
        <end position="60"/>
    </location>
</feature>
<evidence type="ECO:0000255" key="1">
    <source>
        <dbReference type="HAMAP-Rule" id="MF_01371"/>
    </source>
</evidence>
<evidence type="ECO:0000305" key="2"/>
<name>RL30_LACPL</name>